<name>NADD_AERS4</name>
<accession>A4SJW5</accession>
<keyword id="KW-0067">ATP-binding</keyword>
<keyword id="KW-0520">NAD</keyword>
<keyword id="KW-0547">Nucleotide-binding</keyword>
<keyword id="KW-0548">Nucleotidyltransferase</keyword>
<keyword id="KW-0662">Pyridine nucleotide biosynthesis</keyword>
<keyword id="KW-0808">Transferase</keyword>
<evidence type="ECO:0000255" key="1">
    <source>
        <dbReference type="HAMAP-Rule" id="MF_00244"/>
    </source>
</evidence>
<organism>
    <name type="scientific">Aeromonas salmonicida (strain A449)</name>
    <dbReference type="NCBI Taxonomy" id="382245"/>
    <lineage>
        <taxon>Bacteria</taxon>
        <taxon>Pseudomonadati</taxon>
        <taxon>Pseudomonadota</taxon>
        <taxon>Gammaproteobacteria</taxon>
        <taxon>Aeromonadales</taxon>
        <taxon>Aeromonadaceae</taxon>
        <taxon>Aeromonas</taxon>
    </lineage>
</organism>
<protein>
    <recommendedName>
        <fullName evidence="1">Probable nicotinate-nucleotide adenylyltransferase</fullName>
        <ecNumber evidence="1">2.7.7.18</ecNumber>
    </recommendedName>
    <alternativeName>
        <fullName evidence="1">Deamido-NAD(+) diphosphorylase</fullName>
    </alternativeName>
    <alternativeName>
        <fullName evidence="1">Deamido-NAD(+) pyrophosphorylase</fullName>
    </alternativeName>
    <alternativeName>
        <fullName evidence="1">Nicotinate mononucleotide adenylyltransferase</fullName>
        <shortName evidence="1">NaMN adenylyltransferase</shortName>
    </alternativeName>
</protein>
<feature type="chain" id="PRO_0000336677" description="Probable nicotinate-nucleotide adenylyltransferase">
    <location>
        <begin position="1"/>
        <end position="214"/>
    </location>
</feature>
<proteinExistence type="inferred from homology"/>
<reference key="1">
    <citation type="journal article" date="2008" name="BMC Genomics">
        <title>The genome of Aeromonas salmonicida subsp. salmonicida A449: insights into the evolution of a fish pathogen.</title>
        <authorList>
            <person name="Reith M.E."/>
            <person name="Singh R.K."/>
            <person name="Curtis B."/>
            <person name="Boyd J.M."/>
            <person name="Bouevitch A."/>
            <person name="Kimball J."/>
            <person name="Munholland J."/>
            <person name="Murphy C."/>
            <person name="Sarty D."/>
            <person name="Williams J."/>
            <person name="Nash J.H."/>
            <person name="Johnson S.C."/>
            <person name="Brown L.L."/>
        </authorList>
    </citation>
    <scope>NUCLEOTIDE SEQUENCE [LARGE SCALE GENOMIC DNA]</scope>
    <source>
        <strain>A449</strain>
    </source>
</reference>
<dbReference type="EC" id="2.7.7.18" evidence="1"/>
<dbReference type="EMBL" id="CP000644">
    <property type="protein sequence ID" value="ABO89187.1"/>
    <property type="molecule type" value="Genomic_DNA"/>
</dbReference>
<dbReference type="RefSeq" id="WP_005317337.1">
    <property type="nucleotide sequence ID" value="NC_009348.1"/>
</dbReference>
<dbReference type="SMR" id="A4SJW5"/>
<dbReference type="STRING" id="29491.GCA_000820065_02573"/>
<dbReference type="KEGG" id="asa:ASA_1065"/>
<dbReference type="eggNOG" id="COG1057">
    <property type="taxonomic scope" value="Bacteria"/>
</dbReference>
<dbReference type="HOGENOM" id="CLU_069765_0_0_6"/>
<dbReference type="UniPathway" id="UPA00253">
    <property type="reaction ID" value="UER00332"/>
</dbReference>
<dbReference type="Proteomes" id="UP000000225">
    <property type="component" value="Chromosome"/>
</dbReference>
<dbReference type="GO" id="GO:0005524">
    <property type="term" value="F:ATP binding"/>
    <property type="evidence" value="ECO:0007669"/>
    <property type="project" value="UniProtKB-KW"/>
</dbReference>
<dbReference type="GO" id="GO:0004515">
    <property type="term" value="F:nicotinate-nucleotide adenylyltransferase activity"/>
    <property type="evidence" value="ECO:0007669"/>
    <property type="project" value="UniProtKB-UniRule"/>
</dbReference>
<dbReference type="GO" id="GO:0009435">
    <property type="term" value="P:NAD biosynthetic process"/>
    <property type="evidence" value="ECO:0007669"/>
    <property type="project" value="UniProtKB-UniRule"/>
</dbReference>
<dbReference type="CDD" id="cd02165">
    <property type="entry name" value="NMNAT"/>
    <property type="match status" value="1"/>
</dbReference>
<dbReference type="FunFam" id="3.40.50.620:FF:000039">
    <property type="entry name" value="Probable nicotinate-nucleotide adenylyltransferase"/>
    <property type="match status" value="1"/>
</dbReference>
<dbReference type="Gene3D" id="3.40.50.620">
    <property type="entry name" value="HUPs"/>
    <property type="match status" value="1"/>
</dbReference>
<dbReference type="HAMAP" id="MF_00244">
    <property type="entry name" value="NaMN_adenylyltr"/>
    <property type="match status" value="1"/>
</dbReference>
<dbReference type="InterPro" id="IPR004821">
    <property type="entry name" value="Cyt_trans-like"/>
</dbReference>
<dbReference type="InterPro" id="IPR005248">
    <property type="entry name" value="NadD/NMNAT"/>
</dbReference>
<dbReference type="InterPro" id="IPR014729">
    <property type="entry name" value="Rossmann-like_a/b/a_fold"/>
</dbReference>
<dbReference type="NCBIfam" id="TIGR00125">
    <property type="entry name" value="cyt_tran_rel"/>
    <property type="match status" value="1"/>
</dbReference>
<dbReference type="NCBIfam" id="TIGR00482">
    <property type="entry name" value="nicotinate (nicotinamide) nucleotide adenylyltransferase"/>
    <property type="match status" value="1"/>
</dbReference>
<dbReference type="NCBIfam" id="NF000839">
    <property type="entry name" value="PRK00071.1-1"/>
    <property type="match status" value="1"/>
</dbReference>
<dbReference type="NCBIfam" id="NF000840">
    <property type="entry name" value="PRK00071.1-3"/>
    <property type="match status" value="1"/>
</dbReference>
<dbReference type="PANTHER" id="PTHR39321">
    <property type="entry name" value="NICOTINATE-NUCLEOTIDE ADENYLYLTRANSFERASE-RELATED"/>
    <property type="match status" value="1"/>
</dbReference>
<dbReference type="PANTHER" id="PTHR39321:SF3">
    <property type="entry name" value="PHOSPHOPANTETHEINE ADENYLYLTRANSFERASE"/>
    <property type="match status" value="1"/>
</dbReference>
<dbReference type="Pfam" id="PF01467">
    <property type="entry name" value="CTP_transf_like"/>
    <property type="match status" value="1"/>
</dbReference>
<dbReference type="SUPFAM" id="SSF52374">
    <property type="entry name" value="Nucleotidylyl transferase"/>
    <property type="match status" value="1"/>
</dbReference>
<sequence>MLKAPIGLLGGTFDPIHIGHLRPAIDARDALGLAEIRLIPNHIPPHKANPFCSSEQRLAMVRLAAAENPGFVVDERELKRDKPSYTIDTLMALREELPDTPLCFLMGMDSLLTLPSWHRWQALLDYAHLVVSVRPGWQPDYPTKVAELLARHHTTDATALHRRLAGHIWLADNLPIALSATRLRELLAAGQDPRYLLPASVADYIRQQGLYQAD</sequence>
<gene>
    <name evidence="1" type="primary">nadD</name>
    <name type="ordered locus">ASA_1065</name>
</gene>
<comment type="function">
    <text evidence="1">Catalyzes the reversible adenylation of nicotinate mononucleotide (NaMN) to nicotinic acid adenine dinucleotide (NaAD).</text>
</comment>
<comment type="catalytic activity">
    <reaction evidence="1">
        <text>nicotinate beta-D-ribonucleotide + ATP + H(+) = deamido-NAD(+) + diphosphate</text>
        <dbReference type="Rhea" id="RHEA:22860"/>
        <dbReference type="ChEBI" id="CHEBI:15378"/>
        <dbReference type="ChEBI" id="CHEBI:30616"/>
        <dbReference type="ChEBI" id="CHEBI:33019"/>
        <dbReference type="ChEBI" id="CHEBI:57502"/>
        <dbReference type="ChEBI" id="CHEBI:58437"/>
        <dbReference type="EC" id="2.7.7.18"/>
    </reaction>
</comment>
<comment type="pathway">
    <text evidence="1">Cofactor biosynthesis; NAD(+) biosynthesis; deamido-NAD(+) from nicotinate D-ribonucleotide: step 1/1.</text>
</comment>
<comment type="similarity">
    <text evidence="1">Belongs to the NadD family.</text>
</comment>